<protein>
    <recommendedName>
        <fullName evidence="1">Bacteriohemerythrin</fullName>
    </recommendedName>
</protein>
<feature type="chain" id="PRO_0000191848" description="Bacteriohemerythrin">
    <location>
        <begin position="1"/>
        <end position="153"/>
    </location>
</feature>
<feature type="binding site" evidence="1">
    <location>
        <position position="21"/>
    </location>
    <ligand>
        <name>Fe cation</name>
        <dbReference type="ChEBI" id="CHEBI:24875"/>
        <label>1</label>
    </ligand>
</feature>
<feature type="binding site" evidence="1">
    <location>
        <position position="57"/>
    </location>
    <ligand>
        <name>Fe cation</name>
        <dbReference type="ChEBI" id="CHEBI:24875"/>
        <label>1</label>
    </ligand>
</feature>
<feature type="binding site" evidence="1">
    <location>
        <position position="61"/>
    </location>
    <ligand>
        <name>Fe cation</name>
        <dbReference type="ChEBI" id="CHEBI:24875"/>
        <label>1</label>
    </ligand>
</feature>
<feature type="binding site" evidence="1">
    <location>
        <position position="61"/>
    </location>
    <ligand>
        <name>Fe cation</name>
        <dbReference type="ChEBI" id="CHEBI:24875"/>
        <label>2</label>
    </ligand>
</feature>
<feature type="binding site" evidence="1">
    <location>
        <position position="76"/>
    </location>
    <ligand>
        <name>Fe cation</name>
        <dbReference type="ChEBI" id="CHEBI:24875"/>
        <label>2</label>
    </ligand>
</feature>
<feature type="binding site" evidence="1">
    <location>
        <position position="80"/>
    </location>
    <ligand>
        <name>Fe cation</name>
        <dbReference type="ChEBI" id="CHEBI:24875"/>
        <label>2</label>
    </ligand>
</feature>
<feature type="binding site" evidence="1">
    <location>
        <position position="115"/>
    </location>
    <ligand>
        <name>Fe cation</name>
        <dbReference type="ChEBI" id="CHEBI:24875"/>
        <label>2</label>
    </ligand>
</feature>
<feature type="binding site" evidence="1">
    <location>
        <position position="120"/>
    </location>
    <ligand>
        <name>Fe cation</name>
        <dbReference type="ChEBI" id="CHEBI:24875"/>
        <label>1</label>
    </ligand>
</feature>
<feature type="binding site" evidence="1">
    <location>
        <position position="120"/>
    </location>
    <ligand>
        <name>Fe cation</name>
        <dbReference type="ChEBI" id="CHEBI:24875"/>
        <label>2</label>
    </ligand>
</feature>
<evidence type="ECO:0000255" key="1">
    <source>
        <dbReference type="HAMAP-Rule" id="MF_00556"/>
    </source>
</evidence>
<accession>Q9I352</accession>
<keyword id="KW-0408">Iron</keyword>
<keyword id="KW-0479">Metal-binding</keyword>
<keyword id="KW-0561">Oxygen transport</keyword>
<keyword id="KW-1185">Reference proteome</keyword>
<keyword id="KW-0813">Transport</keyword>
<organism>
    <name type="scientific">Pseudomonas aeruginosa (strain ATCC 15692 / DSM 22644 / CIP 104116 / JCM 14847 / LMG 12228 / 1C / PRS 101 / PAO1)</name>
    <dbReference type="NCBI Taxonomy" id="208964"/>
    <lineage>
        <taxon>Bacteria</taxon>
        <taxon>Pseudomonadati</taxon>
        <taxon>Pseudomonadota</taxon>
        <taxon>Gammaproteobacteria</taxon>
        <taxon>Pseudomonadales</taxon>
        <taxon>Pseudomonadaceae</taxon>
        <taxon>Pseudomonas</taxon>
    </lineage>
</organism>
<dbReference type="EMBL" id="AE004091">
    <property type="protein sequence ID" value="AAG05062.1"/>
    <property type="molecule type" value="Genomic_DNA"/>
</dbReference>
<dbReference type="PIR" id="B83435">
    <property type="entry name" value="B83435"/>
</dbReference>
<dbReference type="RefSeq" id="NP_250364.1">
    <property type="nucleotide sequence ID" value="NC_002516.2"/>
</dbReference>
<dbReference type="RefSeq" id="WP_003087637.1">
    <property type="nucleotide sequence ID" value="NZ_QZGE01000003.1"/>
</dbReference>
<dbReference type="SMR" id="Q9I352"/>
<dbReference type="STRING" id="208964.PA1673"/>
<dbReference type="PaxDb" id="208964-PA1673"/>
<dbReference type="DNASU" id="879280"/>
<dbReference type="GeneID" id="879280"/>
<dbReference type="KEGG" id="pae:PA1673"/>
<dbReference type="PATRIC" id="fig|208964.12.peg.1734"/>
<dbReference type="PseudoCAP" id="PA1673"/>
<dbReference type="HOGENOM" id="CLU_086902_2_1_6"/>
<dbReference type="InParanoid" id="Q9I352"/>
<dbReference type="OrthoDB" id="1122424at2"/>
<dbReference type="PhylomeDB" id="Q9I352"/>
<dbReference type="BioCyc" id="PAER208964:G1FZ6-1704-MONOMER"/>
<dbReference type="Proteomes" id="UP000002438">
    <property type="component" value="Chromosome"/>
</dbReference>
<dbReference type="GO" id="GO:0005506">
    <property type="term" value="F:iron ion binding"/>
    <property type="evidence" value="ECO:0007669"/>
    <property type="project" value="UniProtKB-UniRule"/>
</dbReference>
<dbReference type="GO" id="GO:0005344">
    <property type="term" value="F:oxygen carrier activity"/>
    <property type="evidence" value="ECO:0007669"/>
    <property type="project" value="UniProtKB-UniRule"/>
</dbReference>
<dbReference type="CDD" id="cd12107">
    <property type="entry name" value="Hemerythrin"/>
    <property type="match status" value="1"/>
</dbReference>
<dbReference type="Gene3D" id="1.20.120.50">
    <property type="entry name" value="Hemerythrin-like"/>
    <property type="match status" value="1"/>
</dbReference>
<dbReference type="HAMAP" id="MF_00556">
    <property type="entry name" value="Hemerythrin"/>
    <property type="match status" value="1"/>
</dbReference>
<dbReference type="InterPro" id="IPR023504">
    <property type="entry name" value="Bacteriohemerythrin-like"/>
</dbReference>
<dbReference type="InterPro" id="IPR016131">
    <property type="entry name" value="Haemerythrin_Fe_BS"/>
</dbReference>
<dbReference type="InterPro" id="IPR050669">
    <property type="entry name" value="Hemerythrin"/>
</dbReference>
<dbReference type="InterPro" id="IPR012312">
    <property type="entry name" value="Hemerythrin-like"/>
</dbReference>
<dbReference type="InterPro" id="IPR035938">
    <property type="entry name" value="Hemerythrin-like_sf"/>
</dbReference>
<dbReference type="InterPro" id="IPR012827">
    <property type="entry name" value="Hemerythrin_metal-bd"/>
</dbReference>
<dbReference type="NCBIfam" id="NF033749">
    <property type="entry name" value="bact_hemeryth"/>
    <property type="match status" value="1"/>
</dbReference>
<dbReference type="NCBIfam" id="TIGR02481">
    <property type="entry name" value="hemeryth_dom"/>
    <property type="match status" value="1"/>
</dbReference>
<dbReference type="NCBIfam" id="NF002007">
    <property type="entry name" value="PRK00808.1"/>
    <property type="match status" value="1"/>
</dbReference>
<dbReference type="PANTHER" id="PTHR37164">
    <property type="entry name" value="BACTERIOHEMERYTHRIN"/>
    <property type="match status" value="1"/>
</dbReference>
<dbReference type="PANTHER" id="PTHR37164:SF1">
    <property type="entry name" value="BACTERIOHEMERYTHRIN"/>
    <property type="match status" value="1"/>
</dbReference>
<dbReference type="Pfam" id="PF01814">
    <property type="entry name" value="Hemerythrin"/>
    <property type="match status" value="1"/>
</dbReference>
<dbReference type="SUPFAM" id="SSF47188">
    <property type="entry name" value="Hemerythrin-like"/>
    <property type="match status" value="1"/>
</dbReference>
<dbReference type="PROSITE" id="PS00550">
    <property type="entry name" value="HEMERYTHRINS"/>
    <property type="match status" value="1"/>
</dbReference>
<comment type="function">
    <text evidence="1">Oxygen-binding protein. May be involved in a storage mechanism or for delivery to oxygen-requiring enzymes. The oxygen-binding site contains two iron atoms.</text>
</comment>
<comment type="subunit">
    <text evidence="1">Monomer.</text>
</comment>
<comment type="similarity">
    <text evidence="1">Belongs to the hemerythrin family.</text>
</comment>
<reference key="1">
    <citation type="journal article" date="2000" name="Nature">
        <title>Complete genome sequence of Pseudomonas aeruginosa PAO1, an opportunistic pathogen.</title>
        <authorList>
            <person name="Stover C.K."/>
            <person name="Pham X.-Q.T."/>
            <person name="Erwin A.L."/>
            <person name="Mizoguchi S.D."/>
            <person name="Warrener P."/>
            <person name="Hickey M.J."/>
            <person name="Brinkman F.S.L."/>
            <person name="Hufnagle W.O."/>
            <person name="Kowalik D.J."/>
            <person name="Lagrou M."/>
            <person name="Garber R.L."/>
            <person name="Goltry L."/>
            <person name="Tolentino E."/>
            <person name="Westbrock-Wadman S."/>
            <person name="Yuan Y."/>
            <person name="Brody L.L."/>
            <person name="Coulter S.N."/>
            <person name="Folger K.R."/>
            <person name="Kas A."/>
            <person name="Larbig K."/>
            <person name="Lim R.M."/>
            <person name="Smith K.A."/>
            <person name="Spencer D.H."/>
            <person name="Wong G.K.-S."/>
            <person name="Wu Z."/>
            <person name="Paulsen I.T."/>
            <person name="Reizer J."/>
            <person name="Saier M.H. Jr."/>
            <person name="Hancock R.E.W."/>
            <person name="Lory S."/>
            <person name="Olson M.V."/>
        </authorList>
    </citation>
    <scope>NUCLEOTIDE SEQUENCE [LARGE SCALE GENOMIC DNA]</scope>
    <source>
        <strain>ATCC 15692 / DSM 22644 / CIP 104116 / JCM 14847 / LMG 12228 / 1C / PRS 101 / PAO1</strain>
    </source>
</reference>
<gene>
    <name type="ordered locus">PA1673</name>
</gene>
<proteinExistence type="inferred from homology"/>
<sequence length="153" mass="17853">MAHLVWQDDLNTGIQVIDNQHKRIVEMINHLHDAQQGKEHAAIAEVIEELVDYTLSHFAFEETLMEDAGYQFSRAHKKIHELFIRRVSEYRVRFQAGEDVGDELKGLLSRWLFNHIRNDDAGYVDAVRHSMSELVKDKSEGGWLSRSMKRFFG</sequence>
<name>HEMTB_PSEAE</name>